<protein>
    <recommendedName>
        <fullName evidence="1">Nucleoid-associated protein LCABL_24440</fullName>
    </recommendedName>
</protein>
<proteinExistence type="inferred from homology"/>
<organism>
    <name type="scientific">Lacticaseibacillus casei (strain BL23)</name>
    <name type="common">Lactobacillus casei</name>
    <dbReference type="NCBI Taxonomy" id="543734"/>
    <lineage>
        <taxon>Bacteria</taxon>
        <taxon>Bacillati</taxon>
        <taxon>Bacillota</taxon>
        <taxon>Bacilli</taxon>
        <taxon>Lactobacillales</taxon>
        <taxon>Lactobacillaceae</taxon>
        <taxon>Lacticaseibacillus</taxon>
    </lineage>
</organism>
<feature type="chain" id="PRO_1000114619" description="Nucleoid-associated protein LCABL_24440">
    <location>
        <begin position="1"/>
        <end position="99"/>
    </location>
</feature>
<evidence type="ECO:0000255" key="1">
    <source>
        <dbReference type="HAMAP-Rule" id="MF_00274"/>
    </source>
</evidence>
<comment type="function">
    <text evidence="1">Binds to DNA and alters its conformation. May be involved in regulation of gene expression, nucleoid organization and DNA protection.</text>
</comment>
<comment type="subunit">
    <text evidence="1">Homodimer.</text>
</comment>
<comment type="subcellular location">
    <subcellularLocation>
        <location evidence="1">Cytoplasm</location>
        <location evidence="1">Nucleoid</location>
    </subcellularLocation>
</comment>
<comment type="similarity">
    <text evidence="1">Belongs to the YbaB/EbfC family.</text>
</comment>
<sequence length="99" mass="11253">MGNMQGMMKQMQKMQKEMQAAQRELYATEFEGKSASDMVTVKFTGEKIMKDIQIKPEAIDPDDPDMLQDLIIEAVNQAMGTIDKETQDKMGKYTRGLPM</sequence>
<name>Y2444_LACCB</name>
<accession>B3W9Z1</accession>
<reference key="1">
    <citation type="submission" date="2008-06" db="EMBL/GenBank/DDBJ databases">
        <title>Lactobacillus casei BL23 complete genome sequence.</title>
        <authorList>
            <person name="Maze A."/>
            <person name="Boel G."/>
            <person name="Bourand A."/>
            <person name="Loux V."/>
            <person name="Gibrat J.F."/>
            <person name="Zuniga M."/>
            <person name="Hartke A."/>
            <person name="Deutscher J."/>
        </authorList>
    </citation>
    <scope>NUCLEOTIDE SEQUENCE [LARGE SCALE GENOMIC DNA]</scope>
    <source>
        <strain>BL23</strain>
    </source>
</reference>
<keyword id="KW-0963">Cytoplasm</keyword>
<keyword id="KW-0238">DNA-binding</keyword>
<dbReference type="EMBL" id="FM177140">
    <property type="protein sequence ID" value="CAQ67510.1"/>
    <property type="molecule type" value="Genomic_DNA"/>
</dbReference>
<dbReference type="SMR" id="B3W9Z1"/>
<dbReference type="KEGG" id="lcb:LCABL_24440"/>
<dbReference type="HOGENOM" id="CLU_140930_1_1_9"/>
<dbReference type="GO" id="GO:0043590">
    <property type="term" value="C:bacterial nucleoid"/>
    <property type="evidence" value="ECO:0007669"/>
    <property type="project" value="UniProtKB-UniRule"/>
</dbReference>
<dbReference type="GO" id="GO:0005829">
    <property type="term" value="C:cytosol"/>
    <property type="evidence" value="ECO:0007669"/>
    <property type="project" value="TreeGrafter"/>
</dbReference>
<dbReference type="GO" id="GO:0003677">
    <property type="term" value="F:DNA binding"/>
    <property type="evidence" value="ECO:0007669"/>
    <property type="project" value="UniProtKB-UniRule"/>
</dbReference>
<dbReference type="Gene3D" id="3.30.1310.10">
    <property type="entry name" value="Nucleoid-associated protein YbaB-like domain"/>
    <property type="match status" value="1"/>
</dbReference>
<dbReference type="HAMAP" id="MF_00274">
    <property type="entry name" value="DNA_YbaB_EbfC"/>
    <property type="match status" value="1"/>
</dbReference>
<dbReference type="InterPro" id="IPR036894">
    <property type="entry name" value="YbaB-like_sf"/>
</dbReference>
<dbReference type="InterPro" id="IPR004401">
    <property type="entry name" value="YbaB/EbfC"/>
</dbReference>
<dbReference type="NCBIfam" id="TIGR00103">
    <property type="entry name" value="DNA_YbaB_EbfC"/>
    <property type="match status" value="1"/>
</dbReference>
<dbReference type="PANTHER" id="PTHR33449">
    <property type="entry name" value="NUCLEOID-ASSOCIATED PROTEIN YBAB"/>
    <property type="match status" value="1"/>
</dbReference>
<dbReference type="PANTHER" id="PTHR33449:SF1">
    <property type="entry name" value="NUCLEOID-ASSOCIATED PROTEIN YBAB"/>
    <property type="match status" value="1"/>
</dbReference>
<dbReference type="Pfam" id="PF02575">
    <property type="entry name" value="YbaB_DNA_bd"/>
    <property type="match status" value="1"/>
</dbReference>
<dbReference type="PIRSF" id="PIRSF004555">
    <property type="entry name" value="UCP004555"/>
    <property type="match status" value="1"/>
</dbReference>
<dbReference type="SUPFAM" id="SSF82607">
    <property type="entry name" value="YbaB-like"/>
    <property type="match status" value="1"/>
</dbReference>
<gene>
    <name type="ordered locus">LCABL_24440</name>
</gene>